<organism>
    <name type="scientific">Oryza sativa subsp. indica</name>
    <name type="common">Rice</name>
    <dbReference type="NCBI Taxonomy" id="39946"/>
    <lineage>
        <taxon>Eukaryota</taxon>
        <taxon>Viridiplantae</taxon>
        <taxon>Streptophyta</taxon>
        <taxon>Embryophyta</taxon>
        <taxon>Tracheophyta</taxon>
        <taxon>Spermatophyta</taxon>
        <taxon>Magnoliopsida</taxon>
        <taxon>Liliopsida</taxon>
        <taxon>Poales</taxon>
        <taxon>Poaceae</taxon>
        <taxon>BOP clade</taxon>
        <taxon>Oryzoideae</taxon>
        <taxon>Oryzeae</taxon>
        <taxon>Oryzinae</taxon>
        <taxon>Oryza</taxon>
        <taxon>Oryza sativa</taxon>
    </lineage>
</organism>
<keyword id="KW-1003">Cell membrane</keyword>
<keyword id="KW-0961">Cell wall biogenesis/degradation</keyword>
<keyword id="KW-0325">Glycoprotein</keyword>
<keyword id="KW-0472">Membrane</keyword>
<keyword id="KW-1185">Reference proteome</keyword>
<keyword id="KW-0812">Transmembrane</keyword>
<keyword id="KW-1133">Transmembrane helix</keyword>
<comment type="function">
    <text evidence="1">Regulates membrane-cell wall junctions and localized cell wall deposition. Required for establishment of the Casparian strip membrane domain (CSD) and the subsequent formation of Casparian strips, a cell wall modification of the root endodermis that determines an apoplastic barrier between the intraorganismal apoplasm and the extraorganismal apoplasm and prevents lateral diffusion (By similarity).</text>
</comment>
<comment type="subunit">
    <text evidence="1">Homodimer and heterodimers.</text>
</comment>
<comment type="subcellular location">
    <subcellularLocation>
        <location evidence="1">Cell membrane</location>
        <topology evidence="1">Multi-pass membrane protein</topology>
    </subcellularLocation>
    <text evidence="1">Very restricted localization following a belt shape within the plasma membrane which coincides with the position of the Casparian strip membrane domain in the root endodermis.</text>
</comment>
<comment type="similarity">
    <text evidence="3">Belongs to the Casparian strip membrane proteins (CASP) family.</text>
</comment>
<protein>
    <recommendedName>
        <fullName>Casparian strip membrane protein 6</fullName>
        <shortName>OsCASP6</shortName>
    </recommendedName>
</protein>
<dbReference type="EMBL" id="CR855169">
    <property type="protein sequence ID" value="CAH67083.1"/>
    <property type="molecule type" value="Genomic_DNA"/>
</dbReference>
<dbReference type="EMBL" id="CR855203">
    <property type="protein sequence ID" value="CAH67451.1"/>
    <property type="molecule type" value="Genomic_DNA"/>
</dbReference>
<dbReference type="EMBL" id="CM000129">
    <property type="protein sequence ID" value="EAY94401.1"/>
    <property type="molecule type" value="Genomic_DNA"/>
</dbReference>
<dbReference type="SMR" id="A2XU91"/>
<dbReference type="STRING" id="39946.A2XU91"/>
<dbReference type="EnsemblPlants" id="BGIOSGA016544-TA">
    <property type="protein sequence ID" value="BGIOSGA016544-PA"/>
    <property type="gene ID" value="BGIOSGA016544"/>
</dbReference>
<dbReference type="Gramene" id="BGIOSGA016544-TA">
    <property type="protein sequence ID" value="BGIOSGA016544-PA"/>
    <property type="gene ID" value="BGIOSGA016544"/>
</dbReference>
<dbReference type="HOGENOM" id="CLU_066104_3_2_1"/>
<dbReference type="OMA" id="LSIYHIM"/>
<dbReference type="Proteomes" id="UP000007015">
    <property type="component" value="Chromosome 4"/>
</dbReference>
<dbReference type="GO" id="GO:0005886">
    <property type="term" value="C:plasma membrane"/>
    <property type="evidence" value="ECO:0007669"/>
    <property type="project" value="UniProtKB-SubCell"/>
</dbReference>
<dbReference type="GO" id="GO:0071555">
    <property type="term" value="P:cell wall organization"/>
    <property type="evidence" value="ECO:0007669"/>
    <property type="project" value="UniProtKB-KW"/>
</dbReference>
<dbReference type="InterPro" id="IPR006459">
    <property type="entry name" value="CASP/CASPL"/>
</dbReference>
<dbReference type="InterPro" id="IPR006702">
    <property type="entry name" value="CASP_dom"/>
</dbReference>
<dbReference type="InterPro" id="IPR044173">
    <property type="entry name" value="CASPL"/>
</dbReference>
<dbReference type="NCBIfam" id="TIGR01569">
    <property type="entry name" value="A_tha_TIGR01569"/>
    <property type="match status" value="1"/>
</dbReference>
<dbReference type="PANTHER" id="PTHR36488:SF12">
    <property type="entry name" value="CASP-LIKE PROTEIN"/>
    <property type="match status" value="1"/>
</dbReference>
<dbReference type="PANTHER" id="PTHR36488">
    <property type="entry name" value="CASP-LIKE PROTEIN 1U1"/>
    <property type="match status" value="1"/>
</dbReference>
<dbReference type="Pfam" id="PF04535">
    <property type="entry name" value="CASP_dom"/>
    <property type="match status" value="1"/>
</dbReference>
<evidence type="ECO:0000250" key="1"/>
<evidence type="ECO:0000255" key="2"/>
<evidence type="ECO:0000305" key="3"/>
<accession>A2XU91</accession>
<accession>Q01II9</accession>
<sequence length="186" mass="20099">MEHGEISSKAPLVAPVAAGVNRAVAVVDTFLRFIAIIGTIGSAIAMGTTNETLPFFTQFIQFEAKYSDLPSFTFFVAANAVVCTYLVLSIPLSIVHILRPRARYSRLFLVFFDTAMLALLTAGASAAAAIVYLAHKGNVRANWFSICQQFDSFCERISGSLIGSFAAMVLLVVLITLSAFALARRH</sequence>
<reference key="1">
    <citation type="journal article" date="2002" name="Nature">
        <title>Sequence and analysis of rice chromosome 4.</title>
        <authorList>
            <person name="Feng Q."/>
            <person name="Zhang Y."/>
            <person name="Hao P."/>
            <person name="Wang S."/>
            <person name="Fu G."/>
            <person name="Huang Y."/>
            <person name="Li Y."/>
            <person name="Zhu J."/>
            <person name="Liu Y."/>
            <person name="Hu X."/>
            <person name="Jia P."/>
            <person name="Zhang Y."/>
            <person name="Zhao Q."/>
            <person name="Ying K."/>
            <person name="Yu S."/>
            <person name="Tang Y."/>
            <person name="Weng Q."/>
            <person name="Zhang L."/>
            <person name="Lu Y."/>
            <person name="Mu J."/>
            <person name="Lu Y."/>
            <person name="Zhang L.S."/>
            <person name="Yu Z."/>
            <person name="Fan D."/>
            <person name="Liu X."/>
            <person name="Lu T."/>
            <person name="Li C."/>
            <person name="Wu Y."/>
            <person name="Sun T."/>
            <person name="Lei H."/>
            <person name="Li T."/>
            <person name="Hu H."/>
            <person name="Guan J."/>
            <person name="Wu M."/>
            <person name="Zhang R."/>
            <person name="Zhou B."/>
            <person name="Chen Z."/>
            <person name="Chen L."/>
            <person name="Jin Z."/>
            <person name="Wang R."/>
            <person name="Yin H."/>
            <person name="Cai Z."/>
            <person name="Ren S."/>
            <person name="Lv G."/>
            <person name="Gu W."/>
            <person name="Zhu G."/>
            <person name="Tu Y."/>
            <person name="Jia J."/>
            <person name="Zhang Y."/>
            <person name="Chen J."/>
            <person name="Kang H."/>
            <person name="Chen X."/>
            <person name="Shao C."/>
            <person name="Sun Y."/>
            <person name="Hu Q."/>
            <person name="Zhang X."/>
            <person name="Zhang W."/>
            <person name="Wang L."/>
            <person name="Ding C."/>
            <person name="Sheng H."/>
            <person name="Gu J."/>
            <person name="Chen S."/>
            <person name="Ni L."/>
            <person name="Zhu F."/>
            <person name="Chen W."/>
            <person name="Lan L."/>
            <person name="Lai Y."/>
            <person name="Cheng Z."/>
            <person name="Gu M."/>
            <person name="Jiang J."/>
            <person name="Li J."/>
            <person name="Hong G."/>
            <person name="Xue Y."/>
            <person name="Han B."/>
        </authorList>
    </citation>
    <scope>NUCLEOTIDE SEQUENCE [LARGE SCALE GENOMIC DNA]</scope>
    <source>
        <strain>cv. Guang-Lu-Ai No.4</strain>
    </source>
</reference>
<reference key="2">
    <citation type="journal article" date="2005" name="PLoS Biol.">
        <title>The genomes of Oryza sativa: a history of duplications.</title>
        <authorList>
            <person name="Yu J."/>
            <person name="Wang J."/>
            <person name="Lin W."/>
            <person name="Li S."/>
            <person name="Li H."/>
            <person name="Zhou J."/>
            <person name="Ni P."/>
            <person name="Dong W."/>
            <person name="Hu S."/>
            <person name="Zeng C."/>
            <person name="Zhang J."/>
            <person name="Zhang Y."/>
            <person name="Li R."/>
            <person name="Xu Z."/>
            <person name="Li S."/>
            <person name="Li X."/>
            <person name="Zheng H."/>
            <person name="Cong L."/>
            <person name="Lin L."/>
            <person name="Yin J."/>
            <person name="Geng J."/>
            <person name="Li G."/>
            <person name="Shi J."/>
            <person name="Liu J."/>
            <person name="Lv H."/>
            <person name="Li J."/>
            <person name="Wang J."/>
            <person name="Deng Y."/>
            <person name="Ran L."/>
            <person name="Shi X."/>
            <person name="Wang X."/>
            <person name="Wu Q."/>
            <person name="Li C."/>
            <person name="Ren X."/>
            <person name="Wang J."/>
            <person name="Wang X."/>
            <person name="Li D."/>
            <person name="Liu D."/>
            <person name="Zhang X."/>
            <person name="Ji Z."/>
            <person name="Zhao W."/>
            <person name="Sun Y."/>
            <person name="Zhang Z."/>
            <person name="Bao J."/>
            <person name="Han Y."/>
            <person name="Dong L."/>
            <person name="Ji J."/>
            <person name="Chen P."/>
            <person name="Wu S."/>
            <person name="Liu J."/>
            <person name="Xiao Y."/>
            <person name="Bu D."/>
            <person name="Tan J."/>
            <person name="Yang L."/>
            <person name="Ye C."/>
            <person name="Zhang J."/>
            <person name="Xu J."/>
            <person name="Zhou Y."/>
            <person name="Yu Y."/>
            <person name="Zhang B."/>
            <person name="Zhuang S."/>
            <person name="Wei H."/>
            <person name="Liu B."/>
            <person name="Lei M."/>
            <person name="Yu H."/>
            <person name="Li Y."/>
            <person name="Xu H."/>
            <person name="Wei S."/>
            <person name="He X."/>
            <person name="Fang L."/>
            <person name="Zhang Z."/>
            <person name="Zhang Y."/>
            <person name="Huang X."/>
            <person name="Su Z."/>
            <person name="Tong W."/>
            <person name="Li J."/>
            <person name="Tong Z."/>
            <person name="Li S."/>
            <person name="Ye J."/>
            <person name="Wang L."/>
            <person name="Fang L."/>
            <person name="Lei T."/>
            <person name="Chen C.-S."/>
            <person name="Chen H.-C."/>
            <person name="Xu Z."/>
            <person name="Li H."/>
            <person name="Huang H."/>
            <person name="Zhang F."/>
            <person name="Xu H."/>
            <person name="Li N."/>
            <person name="Zhao C."/>
            <person name="Li S."/>
            <person name="Dong L."/>
            <person name="Huang Y."/>
            <person name="Li L."/>
            <person name="Xi Y."/>
            <person name="Qi Q."/>
            <person name="Li W."/>
            <person name="Zhang B."/>
            <person name="Hu W."/>
            <person name="Zhang Y."/>
            <person name="Tian X."/>
            <person name="Jiao Y."/>
            <person name="Liang X."/>
            <person name="Jin J."/>
            <person name="Gao L."/>
            <person name="Zheng W."/>
            <person name="Hao B."/>
            <person name="Liu S.-M."/>
            <person name="Wang W."/>
            <person name="Yuan L."/>
            <person name="Cao M."/>
            <person name="McDermott J."/>
            <person name="Samudrala R."/>
            <person name="Wang J."/>
            <person name="Wong G.K.-S."/>
            <person name="Yang H."/>
        </authorList>
    </citation>
    <scope>NUCLEOTIDE SEQUENCE [LARGE SCALE GENOMIC DNA]</scope>
    <source>
        <strain>cv. 93-11</strain>
    </source>
</reference>
<reference key="3">
    <citation type="journal article" date="2014" name="Plant Physiol.">
        <title>Functional and evolutionary analysis of the CASPARIAN STRIP MEMBRANE DOMAIN PROTEIN family.</title>
        <authorList>
            <person name="Roppolo D."/>
            <person name="Boeckmann B."/>
            <person name="Pfister A."/>
            <person name="Boutet E."/>
            <person name="Rubio M.C."/>
            <person name="Denervaud-Tendon V."/>
            <person name="Vermeer J.E."/>
            <person name="Gheyselinck J."/>
            <person name="Xenarios I."/>
            <person name="Geldner N."/>
        </authorList>
    </citation>
    <scope>GENE FAMILY</scope>
    <scope>NOMENCLATURE</scope>
</reference>
<proteinExistence type="inferred from homology"/>
<name>CASP6_ORYSI</name>
<gene>
    <name type="ORF">H0219H12.8</name>
    <name type="ORF">OsI_16169</name>
    <name type="ORF">OSIGBa0097P08.13</name>
</gene>
<feature type="chain" id="PRO_0000370286" description="Casparian strip membrane protein 6">
    <location>
        <begin position="1"/>
        <end position="186"/>
    </location>
</feature>
<feature type="topological domain" description="Cytoplasmic" evidence="2">
    <location>
        <begin position="1"/>
        <end position="23"/>
    </location>
</feature>
<feature type="transmembrane region" description="Helical" evidence="2">
    <location>
        <begin position="24"/>
        <end position="44"/>
    </location>
</feature>
<feature type="topological domain" description="Extracellular" evidence="2">
    <location>
        <begin position="45"/>
        <end position="73"/>
    </location>
</feature>
<feature type="transmembrane region" description="Helical" evidence="2">
    <location>
        <begin position="74"/>
        <end position="94"/>
    </location>
</feature>
<feature type="topological domain" description="Cytoplasmic" evidence="2">
    <location>
        <begin position="95"/>
        <end position="106"/>
    </location>
</feature>
<feature type="transmembrane region" description="Helical" evidence="2">
    <location>
        <begin position="107"/>
        <end position="127"/>
    </location>
</feature>
<feature type="topological domain" description="Extracellular" evidence="2">
    <location>
        <begin position="128"/>
        <end position="160"/>
    </location>
</feature>
<feature type="transmembrane region" description="Helical" evidence="2">
    <location>
        <begin position="161"/>
        <end position="181"/>
    </location>
</feature>
<feature type="topological domain" description="Cytoplasmic" evidence="2">
    <location>
        <begin position="182"/>
        <end position="186"/>
    </location>
</feature>
<feature type="glycosylation site" description="N-linked (GlcNAc...) asparagine" evidence="2">
    <location>
        <position position="50"/>
    </location>
</feature>